<comment type="function">
    <text evidence="3">Binds with high affinity to muscular nicotinic acetylcholine receptors (nAChRs) (tested on Torpedo marmorata AChR, Kd=0.07 nM) and with low affinity to neuronal alpha-7/CHRNA7 nAChRs (tested on chimeric receptor, Kd=3 uM) and inhibit acetylcholine from binding to the receptor, thereby impairing neuromuscular transmission (PubMed:9305882). Produces peripheral paralysis by blocking neuromuscular transmission at the postsynaptic site.</text>
</comment>
<comment type="subcellular location">
    <subcellularLocation>
        <location evidence="4">Secreted</location>
    </subcellularLocation>
</comment>
<comment type="tissue specificity">
    <text evidence="7">Expressed by the venom gland.</text>
</comment>
<comment type="toxic dose">
    <text evidence="4">LD(50) is 0.036 mg/kg by subcutaneous injection.</text>
</comment>
<comment type="similarity">
    <text evidence="6">Belongs to the three-finger toxin family. Short-chain subfamily. Type I alpha-neurotoxin sub-subfamily.</text>
</comment>
<comment type="caution">
    <text evidence="6">The venom of this snake was originally thought to be that of N.nigricollis.</text>
</comment>
<proteinExistence type="evidence at protein level"/>
<name>3S11_NAJPA</name>
<sequence>LECHNQQSSQPPTTKTCPGETNCYKKVWRDHRGTIIERGCGCPTVKPGIKLNCCTTDKCNN</sequence>
<feature type="chain" id="PRO_0000093608" description="Short neurotoxin 1" evidence="4">
    <location>
        <begin position="1"/>
        <end position="61"/>
    </location>
</feature>
<feature type="disulfide bond" evidence="1 2 8 9 10">
    <location>
        <begin position="3"/>
        <end position="23"/>
    </location>
</feature>
<feature type="disulfide bond" evidence="1 2 8 9 10">
    <location>
        <begin position="17"/>
        <end position="40"/>
    </location>
</feature>
<feature type="disulfide bond" evidence="1 2 8 9 10">
    <location>
        <begin position="42"/>
        <end position="53"/>
    </location>
</feature>
<feature type="disulfide bond" evidence="1 2 8 9 10">
    <location>
        <begin position="54"/>
        <end position="59"/>
    </location>
</feature>
<feature type="strand" evidence="11">
    <location>
        <begin position="2"/>
        <end position="4"/>
    </location>
</feature>
<feature type="strand" evidence="11">
    <location>
        <begin position="14"/>
        <end position="16"/>
    </location>
</feature>
<feature type="strand" evidence="11">
    <location>
        <begin position="23"/>
        <end position="30"/>
    </location>
</feature>
<feature type="strand" evidence="11">
    <location>
        <begin position="33"/>
        <end position="41"/>
    </location>
</feature>
<feature type="strand" evidence="11">
    <location>
        <begin position="50"/>
        <end position="54"/>
    </location>
</feature>
<keyword id="KW-0002">3D-structure</keyword>
<keyword id="KW-0008">Acetylcholine receptor inhibiting toxin</keyword>
<keyword id="KW-0903">Direct protein sequencing</keyword>
<keyword id="KW-1015">Disulfide bond</keyword>
<keyword id="KW-0872">Ion channel impairing toxin</keyword>
<keyword id="KW-0528">Neurotoxin</keyword>
<keyword id="KW-0629">Postsynaptic neurotoxin</keyword>
<keyword id="KW-0964">Secreted</keyword>
<keyword id="KW-0800">Toxin</keyword>
<evidence type="ECO:0000269" key="1">
    <source>
    </source>
</evidence>
<evidence type="ECO:0000269" key="2">
    <source>
    </source>
</evidence>
<evidence type="ECO:0000269" key="3">
    <source>
    </source>
</evidence>
<evidence type="ECO:0000269" key="4">
    <source ref="1"/>
</evidence>
<evidence type="ECO:0000303" key="5">
    <source>
    </source>
</evidence>
<evidence type="ECO:0000305" key="6"/>
<evidence type="ECO:0000305" key="7">
    <source ref="1"/>
</evidence>
<evidence type="ECO:0000312" key="8">
    <source>
        <dbReference type="PDB" id="1IQ9"/>
    </source>
</evidence>
<evidence type="ECO:0000312" key="9">
    <source>
        <dbReference type="PDB" id="1NEA"/>
    </source>
</evidence>
<evidence type="ECO:0000312" key="10">
    <source>
        <dbReference type="PDB" id="3NDS"/>
    </source>
</evidence>
<evidence type="ECO:0007829" key="11">
    <source>
        <dbReference type="PDB" id="3NDS"/>
    </source>
</evidence>
<organism>
    <name type="scientific">Naja pallida</name>
    <name type="common">Red spitting cobra</name>
    <dbReference type="NCBI Taxonomy" id="8658"/>
    <lineage>
        <taxon>Eukaryota</taxon>
        <taxon>Metazoa</taxon>
        <taxon>Chordata</taxon>
        <taxon>Craniata</taxon>
        <taxon>Vertebrata</taxon>
        <taxon>Euteleostomi</taxon>
        <taxon>Lepidosauria</taxon>
        <taxon>Squamata</taxon>
        <taxon>Bifurcata</taxon>
        <taxon>Unidentata</taxon>
        <taxon>Episquamata</taxon>
        <taxon>Toxicofera</taxon>
        <taxon>Serpentes</taxon>
        <taxon>Colubroidea</taxon>
        <taxon>Elapidae</taxon>
        <taxon>Elapinae</taxon>
        <taxon>Naja</taxon>
    </lineage>
</organism>
<reference key="1">
    <citation type="journal article" date="1967" name="Jpn. J. Microbiol.">
        <title>The amino acid sequence of a neurotoxin from Naja nigricollis venom.</title>
        <authorList>
            <person name="Eaker D.L."/>
            <person name="Porath J."/>
        </authorList>
    </citation>
    <scope>PROTEIN SEQUENCE</scope>
    <scope>TOXIC DOSE</scope>
    <scope>SUBCELLULAR LOCATION</scope>
    <source>
        <tissue>Venom</tissue>
    </source>
</reference>
<reference key="2">
    <citation type="journal article" date="1997" name="J. Biol. Chem.">
        <title>Only snake curaremimetic toxins with a fifth disulfide bond have high affinity for the neuronal alpha7 nicotinic receptor.</title>
        <authorList>
            <person name="Servent D."/>
            <person name="Winckler-Dietrich V."/>
            <person name="Hu H.-Y."/>
            <person name="Kessler P."/>
            <person name="Drevet P."/>
            <person name="Bertrand D."/>
            <person name="Menez A."/>
        </authorList>
    </citation>
    <scope>FUNCTION</scope>
    <source>
        <tissue>Venom</tissue>
    </source>
</reference>
<reference key="3">
    <citation type="journal article" date="1992" name="Biochemistry">
        <title>Three-dimensional solution structure of a curaremimetic toxin from Naja nigricollis venom: a proton NMR and molecular modeling study.</title>
        <authorList>
            <person name="Zinn-Justin S."/>
            <person name="Roumestand C."/>
            <person name="Gilquin B."/>
            <person name="Bontems F."/>
            <person name="Menez A."/>
            <person name="Toma F."/>
        </authorList>
    </citation>
    <scope>STRUCTURE BY NMR</scope>
    <scope>DISULFIDE BONDS</scope>
</reference>
<reference key="4">
    <citation type="journal article" date="2003" name="Protein Sci.">
        <title>Motions and structural variability within toxins: implication for their use as scaffolds for protein engineering.</title>
        <authorList>
            <person name="Gilquin B."/>
            <person name="Bourgoin M."/>
            <person name="Menez R."/>
            <person name="Le Du M.-H."/>
            <person name="Servent D."/>
            <person name="Zinn-Justin S."/>
            <person name="Menez A."/>
        </authorList>
    </citation>
    <scope>X-RAY CRYSTALLOGRAPHY (1.8 ANGSTROMS)</scope>
    <scope>DISULFIDE BONDS</scope>
</reference>
<accession>P01426</accession>
<protein>
    <recommendedName>
        <fullName>Short neurotoxin 1</fullName>
    </recommendedName>
    <alternativeName>
        <fullName>Neurotoxin alpha</fullName>
        <shortName evidence="5">Toxin alpha</shortName>
    </alternativeName>
</protein>
<dbReference type="PIR" id="A01695">
    <property type="entry name" value="N1NJ1B"/>
</dbReference>
<dbReference type="PDB" id="1IQ9">
    <property type="method" value="X-ray"/>
    <property type="resolution" value="1.80 A"/>
    <property type="chains" value="A=1-61"/>
</dbReference>
<dbReference type="PDB" id="1NEA">
    <property type="method" value="NMR"/>
    <property type="chains" value="A=1-61"/>
</dbReference>
<dbReference type="PDB" id="3NDS">
    <property type="method" value="X-ray"/>
    <property type="resolution" value="1.20 A"/>
    <property type="chains" value="A=1-61"/>
</dbReference>
<dbReference type="PDBsum" id="1IQ9"/>
<dbReference type="PDBsum" id="1NEA"/>
<dbReference type="PDBsum" id="3NDS"/>
<dbReference type="SMR" id="P01426"/>
<dbReference type="EvolutionaryTrace" id="P01426"/>
<dbReference type="GO" id="GO:0005576">
    <property type="term" value="C:extracellular region"/>
    <property type="evidence" value="ECO:0007669"/>
    <property type="project" value="UniProtKB-SubCell"/>
</dbReference>
<dbReference type="GO" id="GO:0030550">
    <property type="term" value="F:acetylcholine receptor inhibitor activity"/>
    <property type="evidence" value="ECO:0007669"/>
    <property type="project" value="UniProtKB-KW"/>
</dbReference>
<dbReference type="GO" id="GO:0099106">
    <property type="term" value="F:ion channel regulator activity"/>
    <property type="evidence" value="ECO:0007669"/>
    <property type="project" value="UniProtKB-KW"/>
</dbReference>
<dbReference type="GO" id="GO:0090729">
    <property type="term" value="F:toxin activity"/>
    <property type="evidence" value="ECO:0007669"/>
    <property type="project" value="UniProtKB-KW"/>
</dbReference>
<dbReference type="CDD" id="cd00206">
    <property type="entry name" value="TFP_snake_toxin"/>
    <property type="match status" value="1"/>
</dbReference>
<dbReference type="FunFam" id="2.10.60.10:FF:000024">
    <property type="entry name" value="Cytotoxin 1"/>
    <property type="match status" value="1"/>
</dbReference>
<dbReference type="Gene3D" id="2.10.60.10">
    <property type="entry name" value="CD59"/>
    <property type="match status" value="1"/>
</dbReference>
<dbReference type="InterPro" id="IPR003571">
    <property type="entry name" value="Snake_3FTx"/>
</dbReference>
<dbReference type="InterPro" id="IPR045860">
    <property type="entry name" value="Snake_toxin-like_sf"/>
</dbReference>
<dbReference type="InterPro" id="IPR018354">
    <property type="entry name" value="Snake_toxin_con_site"/>
</dbReference>
<dbReference type="InterPro" id="IPR054131">
    <property type="entry name" value="Toxin_cobra-type"/>
</dbReference>
<dbReference type="Pfam" id="PF21947">
    <property type="entry name" value="Toxin_cobra-type"/>
    <property type="match status" value="1"/>
</dbReference>
<dbReference type="SUPFAM" id="SSF57302">
    <property type="entry name" value="Snake toxin-like"/>
    <property type="match status" value="1"/>
</dbReference>
<dbReference type="PROSITE" id="PS00272">
    <property type="entry name" value="SNAKE_TOXIN"/>
    <property type="match status" value="1"/>
</dbReference>